<sequence>MLGLHVGTLISLFLCILLEPIEGSLMQPCQPINQTVSLEKEGCPTCLVIRAPICSGHCVTKEPVFKSPFSTVYQHVCTYRDVRYEMIRLPDCPPWSDPHVTYPVALSCDCSLCNMDTSDCTIESLQPDFCITQRVLTDGDMW</sequence>
<name>GTHB2_ONCTS</name>
<comment type="function">
    <text>Involved in gametogenesis and steroidogenesis.</text>
</comment>
<comment type="subunit">
    <text>Heterodimer of an alpha and a beta chain.</text>
</comment>
<comment type="subcellular location">
    <subcellularLocation>
        <location>Secreted</location>
    </subcellularLocation>
</comment>
<comment type="similarity">
    <text evidence="2">Belongs to the glycoprotein hormones subunit beta family.</text>
</comment>
<accession>P07732</accession>
<keyword id="KW-1015">Disulfide bond</keyword>
<keyword id="KW-0325">Glycoprotein</keyword>
<keyword id="KW-0372">Hormone</keyword>
<keyword id="KW-1185">Reference proteome</keyword>
<keyword id="KW-0964">Secreted</keyword>
<keyword id="KW-0732">Signal</keyword>
<evidence type="ECO:0000250" key="1"/>
<evidence type="ECO:0000305" key="2"/>
<reference key="1">
    <citation type="journal article" date="1986" name="Eur. J. Biochem.">
        <title>Molecular cloning and sequencing of salmon gonadotropin beta subunit.</title>
        <authorList>
            <person name="Trinh K.-Y."/>
            <person name="Wang N.C."/>
            <person name="Hew C.-L."/>
            <person name="Crim L.W."/>
        </authorList>
    </citation>
    <scope>NUCLEOTIDE SEQUENCE [MRNA]</scope>
</reference>
<protein>
    <recommendedName>
        <fullName>Gonadotropin subunit beta-2</fullName>
    </recommendedName>
    <alternativeName>
        <fullName>GTH-II-beta</fullName>
    </alternativeName>
    <alternativeName>
        <fullName>Gonadotropin beta-II chain</fullName>
    </alternativeName>
</protein>
<proteinExistence type="evidence at transcript level"/>
<feature type="signal peptide">
    <location>
        <begin position="1"/>
        <end position="23"/>
    </location>
</feature>
<feature type="chain" id="PRO_0000011703" description="Gonadotropin subunit beta-2">
    <location>
        <begin position="24"/>
        <end position="142"/>
    </location>
</feature>
<feature type="glycosylation site" description="N-linked (GlcNAc...) asparagine" evidence="2">
    <location>
        <position position="33"/>
    </location>
</feature>
<feature type="disulfide bond" evidence="1">
    <location>
        <begin position="29"/>
        <end position="77"/>
    </location>
</feature>
<feature type="disulfide bond" evidence="1">
    <location>
        <begin position="43"/>
        <end position="92"/>
    </location>
</feature>
<feature type="disulfide bond" evidence="1">
    <location>
        <begin position="46"/>
        <end position="130"/>
    </location>
</feature>
<feature type="disulfide bond" evidence="1">
    <location>
        <begin position="54"/>
        <end position="108"/>
    </location>
</feature>
<feature type="disulfide bond" evidence="1">
    <location>
        <begin position="58"/>
        <end position="110"/>
    </location>
</feature>
<feature type="disulfide bond" evidence="1">
    <location>
        <begin position="113"/>
        <end position="120"/>
    </location>
</feature>
<gene>
    <name type="primary">cgbb</name>
</gene>
<organism>
    <name type="scientific">Oncorhynchus tshawytscha</name>
    <name type="common">Chinook salmon</name>
    <name type="synonym">Salmo tshawytscha</name>
    <dbReference type="NCBI Taxonomy" id="74940"/>
    <lineage>
        <taxon>Eukaryota</taxon>
        <taxon>Metazoa</taxon>
        <taxon>Chordata</taxon>
        <taxon>Craniata</taxon>
        <taxon>Vertebrata</taxon>
        <taxon>Euteleostomi</taxon>
        <taxon>Actinopterygii</taxon>
        <taxon>Neopterygii</taxon>
        <taxon>Teleostei</taxon>
        <taxon>Protacanthopterygii</taxon>
        <taxon>Salmoniformes</taxon>
        <taxon>Salmonidae</taxon>
        <taxon>Salmoninae</taxon>
        <taxon>Oncorhynchus</taxon>
    </lineage>
</organism>
<dbReference type="EMBL" id="X04404">
    <property type="protein sequence ID" value="CAA27992.1"/>
    <property type="molecule type" value="mRNA"/>
</dbReference>
<dbReference type="PIR" id="A25800">
    <property type="entry name" value="A25800"/>
</dbReference>
<dbReference type="SMR" id="P07732"/>
<dbReference type="GlyCosmos" id="P07732">
    <property type="glycosylation" value="1 site, No reported glycans"/>
</dbReference>
<dbReference type="Proteomes" id="UP000694402">
    <property type="component" value="Unplaced"/>
</dbReference>
<dbReference type="GO" id="GO:0005737">
    <property type="term" value="C:cytoplasm"/>
    <property type="evidence" value="ECO:0007669"/>
    <property type="project" value="TreeGrafter"/>
</dbReference>
<dbReference type="GO" id="GO:0005615">
    <property type="term" value="C:extracellular space"/>
    <property type="evidence" value="ECO:0000315"/>
    <property type="project" value="AgBase"/>
</dbReference>
<dbReference type="GO" id="GO:0005179">
    <property type="term" value="F:hormone activity"/>
    <property type="evidence" value="ECO:0000315"/>
    <property type="project" value="AgBase"/>
</dbReference>
<dbReference type="GO" id="GO:0035941">
    <property type="term" value="P:androstenedione secretion"/>
    <property type="evidence" value="ECO:0000315"/>
    <property type="project" value="AgBase"/>
</dbReference>
<dbReference type="GO" id="GO:0007186">
    <property type="term" value="P:G protein-coupled receptor signaling pathway"/>
    <property type="evidence" value="ECO:0007669"/>
    <property type="project" value="TreeGrafter"/>
</dbReference>
<dbReference type="GO" id="GO:0042701">
    <property type="term" value="P:progesterone secretion"/>
    <property type="evidence" value="ECO:0000315"/>
    <property type="project" value="AgBase"/>
</dbReference>
<dbReference type="GO" id="GO:0061370">
    <property type="term" value="P:testosterone biosynthetic process"/>
    <property type="evidence" value="ECO:0000315"/>
    <property type="project" value="AgBase"/>
</dbReference>
<dbReference type="GO" id="GO:0035936">
    <property type="term" value="P:testosterone secretion"/>
    <property type="evidence" value="ECO:0000315"/>
    <property type="project" value="AgBase"/>
</dbReference>
<dbReference type="CDD" id="cd00069">
    <property type="entry name" value="GHB_like"/>
    <property type="match status" value="1"/>
</dbReference>
<dbReference type="FunFam" id="2.10.90.10:FF:000007">
    <property type="entry name" value="Luteinizing hormone beta subunit"/>
    <property type="match status" value="1"/>
</dbReference>
<dbReference type="Gene3D" id="2.10.90.10">
    <property type="entry name" value="Cystine-knot cytokines"/>
    <property type="match status" value="1"/>
</dbReference>
<dbReference type="InterPro" id="IPR029034">
    <property type="entry name" value="Cystine-knot_cytokine"/>
</dbReference>
<dbReference type="InterPro" id="IPR006208">
    <property type="entry name" value="Glyco_hormone_CN"/>
</dbReference>
<dbReference type="InterPro" id="IPR001545">
    <property type="entry name" value="Gonadotropin_bsu"/>
</dbReference>
<dbReference type="InterPro" id="IPR018245">
    <property type="entry name" value="Gonadotropin_bsu_CS"/>
</dbReference>
<dbReference type="PANTHER" id="PTHR11515">
    <property type="entry name" value="GLYCOPROTEIN HORMONE BETA CHAIN"/>
    <property type="match status" value="1"/>
</dbReference>
<dbReference type="PANTHER" id="PTHR11515:SF11">
    <property type="entry name" value="LUTROPIN SUBUNIT BETA"/>
    <property type="match status" value="1"/>
</dbReference>
<dbReference type="Pfam" id="PF00007">
    <property type="entry name" value="Cys_knot"/>
    <property type="match status" value="1"/>
</dbReference>
<dbReference type="SMART" id="SM00068">
    <property type="entry name" value="GHB"/>
    <property type="match status" value="1"/>
</dbReference>
<dbReference type="SUPFAM" id="SSF57501">
    <property type="entry name" value="Cystine-knot cytokines"/>
    <property type="match status" value="1"/>
</dbReference>
<dbReference type="PROSITE" id="PS00261">
    <property type="entry name" value="GLYCO_HORMONE_BETA_1"/>
    <property type="match status" value="1"/>
</dbReference>
<dbReference type="PROSITE" id="PS00689">
    <property type="entry name" value="GLYCO_HORMONE_BETA_2"/>
    <property type="match status" value="1"/>
</dbReference>